<evidence type="ECO:0000255" key="1">
    <source>
        <dbReference type="HAMAP-Rule" id="MF_01815"/>
    </source>
</evidence>
<evidence type="ECO:0007829" key="2">
    <source>
        <dbReference type="PDB" id="4NHD"/>
    </source>
</evidence>
<sequence length="316" mass="33749">MYSKILGTGSYLPSQVRTNADLEKMVETSDEWIVARTGIRERRIAADNETVADMAFFAAQNAINMAGIDKHDIDMIIVATTSASHTFPSAACQVQGKLGIKGCPAFDLAAACSGFMYALSIADQHVKSGMCKHVLVIGADALSKTCDPTDRSTIILFGDGAGAVVVGASNEPGILSTHIHADGEFGDLLSLEVPVRGGDSDKWLHMAGNEVFKVAVTQLSKLVVDTLKANNMHKSELDWLVPHQANYRIISATAKKLSMSLDQVVITLDRHGNTSAATVPTALDEAVRDGRIQRGQMLLLEAFGGGFTWGSALVKF</sequence>
<keyword id="KW-0002">3D-structure</keyword>
<keyword id="KW-0012">Acyltransferase</keyword>
<keyword id="KW-0963">Cytoplasm</keyword>
<keyword id="KW-0275">Fatty acid biosynthesis</keyword>
<keyword id="KW-0276">Fatty acid metabolism</keyword>
<keyword id="KW-0444">Lipid biosynthesis</keyword>
<keyword id="KW-0443">Lipid metabolism</keyword>
<keyword id="KW-0511">Multifunctional enzyme</keyword>
<keyword id="KW-1185">Reference proteome</keyword>
<keyword id="KW-0808">Transferase</keyword>
<comment type="function">
    <text evidence="1">Catalyzes the condensation reaction of fatty acid synthesis by the addition to an acyl acceptor of two carbons from malonyl-ACP. Catalyzes the first condensation reaction which initiates fatty acid synthesis and may therefore play a role in governing the total rate of fatty acid production. Possesses both acetoacetyl-ACP synthase and acetyl transacylase activities. Its substrate specificity determines the biosynthesis of branched-chain and/or straight-chain of fatty acids.</text>
</comment>
<comment type="catalytic activity">
    <reaction evidence="1">
        <text>malonyl-[ACP] + acetyl-CoA + H(+) = 3-oxobutanoyl-[ACP] + CO2 + CoA</text>
        <dbReference type="Rhea" id="RHEA:12080"/>
        <dbReference type="Rhea" id="RHEA-COMP:9623"/>
        <dbReference type="Rhea" id="RHEA-COMP:9625"/>
        <dbReference type="ChEBI" id="CHEBI:15378"/>
        <dbReference type="ChEBI" id="CHEBI:16526"/>
        <dbReference type="ChEBI" id="CHEBI:57287"/>
        <dbReference type="ChEBI" id="CHEBI:57288"/>
        <dbReference type="ChEBI" id="CHEBI:78449"/>
        <dbReference type="ChEBI" id="CHEBI:78450"/>
        <dbReference type="EC" id="2.3.1.180"/>
    </reaction>
</comment>
<comment type="pathway">
    <text evidence="1">Lipid metabolism; fatty acid biosynthesis.</text>
</comment>
<comment type="subunit">
    <text evidence="1">Homodimer.</text>
</comment>
<comment type="subcellular location">
    <subcellularLocation>
        <location evidence="1">Cytoplasm</location>
    </subcellularLocation>
</comment>
<comment type="domain">
    <text evidence="1">The last Arg residue of the ACP-binding site is essential for the weak association between ACP/AcpP and FabH.</text>
</comment>
<comment type="similarity">
    <text evidence="1">Belongs to the thiolase-like superfamily. FabH family.</text>
</comment>
<name>FABH1_VIBCH</name>
<reference key="1">
    <citation type="journal article" date="2000" name="Nature">
        <title>DNA sequence of both chromosomes of the cholera pathogen Vibrio cholerae.</title>
        <authorList>
            <person name="Heidelberg J.F."/>
            <person name="Eisen J.A."/>
            <person name="Nelson W.C."/>
            <person name="Clayton R.A."/>
            <person name="Gwinn M.L."/>
            <person name="Dodson R.J."/>
            <person name="Haft D.H."/>
            <person name="Hickey E.K."/>
            <person name="Peterson J.D."/>
            <person name="Umayam L.A."/>
            <person name="Gill S.R."/>
            <person name="Nelson K.E."/>
            <person name="Read T.D."/>
            <person name="Tettelin H."/>
            <person name="Richardson D.L."/>
            <person name="Ermolaeva M.D."/>
            <person name="Vamathevan J.J."/>
            <person name="Bass S."/>
            <person name="Qin H."/>
            <person name="Dragoi I."/>
            <person name="Sellers P."/>
            <person name="McDonald L.A."/>
            <person name="Utterback T.R."/>
            <person name="Fleischmann R.D."/>
            <person name="Nierman W.C."/>
            <person name="White O."/>
            <person name="Salzberg S.L."/>
            <person name="Smith H.O."/>
            <person name="Colwell R.R."/>
            <person name="Mekalanos J.J."/>
            <person name="Venter J.C."/>
            <person name="Fraser C.M."/>
        </authorList>
    </citation>
    <scope>NUCLEOTIDE SEQUENCE [LARGE SCALE GENOMIC DNA]</scope>
    <source>
        <strain>ATCC 39315 / El Tor Inaba N16961</strain>
    </source>
</reference>
<feature type="chain" id="PRO_0000110502" description="Beta-ketoacyl-[acyl-carrier-protein] synthase III 1">
    <location>
        <begin position="1"/>
        <end position="316"/>
    </location>
</feature>
<feature type="region of interest" description="ACP-binding" evidence="1">
    <location>
        <begin position="244"/>
        <end position="248"/>
    </location>
</feature>
<feature type="active site" evidence="1">
    <location>
        <position position="112"/>
    </location>
</feature>
<feature type="active site" evidence="1">
    <location>
        <position position="243"/>
    </location>
</feature>
<feature type="active site" evidence="1">
    <location>
        <position position="273"/>
    </location>
</feature>
<feature type="strand" evidence="2">
    <location>
        <begin position="2"/>
        <end position="11"/>
    </location>
</feature>
<feature type="strand" evidence="2">
    <location>
        <begin position="14"/>
        <end position="18"/>
    </location>
</feature>
<feature type="helix" evidence="2">
    <location>
        <begin position="19"/>
        <end position="25"/>
    </location>
</feature>
<feature type="helix" evidence="2">
    <location>
        <begin position="30"/>
        <end position="37"/>
    </location>
</feature>
<feature type="strand" evidence="2">
    <location>
        <begin position="41"/>
        <end position="44"/>
    </location>
</feature>
<feature type="helix" evidence="2">
    <location>
        <begin position="51"/>
        <end position="66"/>
    </location>
</feature>
<feature type="helix" evidence="2">
    <location>
        <begin position="70"/>
        <end position="72"/>
    </location>
</feature>
<feature type="strand" evidence="2">
    <location>
        <begin position="75"/>
        <end position="79"/>
    </location>
</feature>
<feature type="strand" evidence="2">
    <location>
        <begin position="84"/>
        <end position="88"/>
    </location>
</feature>
<feature type="helix" evidence="2">
    <location>
        <begin position="90"/>
        <end position="98"/>
    </location>
</feature>
<feature type="strand" evidence="2">
    <location>
        <begin position="105"/>
        <end position="109"/>
    </location>
</feature>
<feature type="helix" evidence="2">
    <location>
        <begin position="111"/>
        <end position="113"/>
    </location>
</feature>
<feature type="helix" evidence="2">
    <location>
        <begin position="114"/>
        <end position="127"/>
    </location>
</feature>
<feature type="strand" evidence="2">
    <location>
        <begin position="132"/>
        <end position="141"/>
    </location>
</feature>
<feature type="helix" evidence="2">
    <location>
        <begin position="142"/>
        <end position="145"/>
    </location>
</feature>
<feature type="helix" evidence="2">
    <location>
        <begin position="151"/>
        <end position="154"/>
    </location>
</feature>
<feature type="strand" evidence="2">
    <location>
        <begin position="159"/>
        <end position="171"/>
    </location>
</feature>
<feature type="strand" evidence="2">
    <location>
        <begin position="173"/>
        <end position="181"/>
    </location>
</feature>
<feature type="helix" evidence="2">
    <location>
        <begin position="186"/>
        <end position="188"/>
    </location>
</feature>
<feature type="strand" evidence="2">
    <location>
        <begin position="189"/>
        <end position="192"/>
    </location>
</feature>
<feature type="helix" evidence="2">
    <location>
        <begin position="208"/>
        <end position="229"/>
    </location>
</feature>
<feature type="helix" evidence="2">
    <location>
        <begin position="234"/>
        <end position="236"/>
    </location>
</feature>
<feature type="strand" evidence="2">
    <location>
        <begin position="239"/>
        <end position="242"/>
    </location>
</feature>
<feature type="helix" evidence="2">
    <location>
        <begin position="247"/>
        <end position="256"/>
    </location>
</feature>
<feature type="helix" evidence="2">
    <location>
        <begin position="261"/>
        <end position="263"/>
    </location>
</feature>
<feature type="helix" evidence="2">
    <location>
        <begin position="268"/>
        <end position="271"/>
    </location>
</feature>
<feature type="helix" evidence="2">
    <location>
        <begin position="275"/>
        <end position="277"/>
    </location>
</feature>
<feature type="helix" evidence="2">
    <location>
        <begin position="278"/>
        <end position="288"/>
    </location>
</feature>
<feature type="strand" evidence="2">
    <location>
        <begin position="297"/>
        <end position="304"/>
    </location>
</feature>
<feature type="turn" evidence="2">
    <location>
        <begin position="305"/>
        <end position="307"/>
    </location>
</feature>
<feature type="strand" evidence="2">
    <location>
        <begin position="308"/>
        <end position="315"/>
    </location>
</feature>
<dbReference type="EC" id="2.3.1.180" evidence="1"/>
<dbReference type="EMBL" id="AE003852">
    <property type="protein sequence ID" value="AAF95171.1"/>
    <property type="molecule type" value="Genomic_DNA"/>
</dbReference>
<dbReference type="PIR" id="H82128">
    <property type="entry name" value="H82128"/>
</dbReference>
<dbReference type="RefSeq" id="NP_231657.1">
    <property type="nucleotide sequence ID" value="NC_002505.1"/>
</dbReference>
<dbReference type="RefSeq" id="WP_000287010.1">
    <property type="nucleotide sequence ID" value="NZ_LT906614.1"/>
</dbReference>
<dbReference type="PDB" id="4NHD">
    <property type="method" value="X-ray"/>
    <property type="resolution" value="1.78 A"/>
    <property type="chains" value="A/B/C/D=1-316"/>
</dbReference>
<dbReference type="PDBsum" id="4NHD"/>
<dbReference type="SMR" id="Q9KQH5"/>
<dbReference type="STRING" id="243277.VC_2023"/>
<dbReference type="DNASU" id="2613402"/>
<dbReference type="EnsemblBacteria" id="AAF95171">
    <property type="protein sequence ID" value="AAF95171"/>
    <property type="gene ID" value="VC_2023"/>
</dbReference>
<dbReference type="KEGG" id="vch:VC_2023"/>
<dbReference type="PATRIC" id="fig|243277.26.peg.1933"/>
<dbReference type="eggNOG" id="COG0332">
    <property type="taxonomic scope" value="Bacteria"/>
</dbReference>
<dbReference type="HOGENOM" id="CLU_039592_4_1_6"/>
<dbReference type="UniPathway" id="UPA00094"/>
<dbReference type="EvolutionaryTrace" id="Q9KQH5"/>
<dbReference type="Proteomes" id="UP000000584">
    <property type="component" value="Chromosome 1"/>
</dbReference>
<dbReference type="GO" id="GO:0005737">
    <property type="term" value="C:cytoplasm"/>
    <property type="evidence" value="ECO:0007669"/>
    <property type="project" value="UniProtKB-SubCell"/>
</dbReference>
<dbReference type="GO" id="GO:0004315">
    <property type="term" value="F:3-oxoacyl-[acyl-carrier-protein] synthase activity"/>
    <property type="evidence" value="ECO:0007669"/>
    <property type="project" value="InterPro"/>
</dbReference>
<dbReference type="GO" id="GO:0033818">
    <property type="term" value="F:beta-ketoacyl-acyl-carrier-protein synthase III activity"/>
    <property type="evidence" value="ECO:0007669"/>
    <property type="project" value="UniProtKB-UniRule"/>
</dbReference>
<dbReference type="GO" id="GO:0006633">
    <property type="term" value="P:fatty acid biosynthetic process"/>
    <property type="evidence" value="ECO:0007669"/>
    <property type="project" value="UniProtKB-UniRule"/>
</dbReference>
<dbReference type="CDD" id="cd00830">
    <property type="entry name" value="KAS_III"/>
    <property type="match status" value="1"/>
</dbReference>
<dbReference type="FunFam" id="3.40.47.10:FF:000056">
    <property type="entry name" value="3-oxoacyl-[acyl-carrier-protein] synthase 3"/>
    <property type="match status" value="1"/>
</dbReference>
<dbReference type="FunFam" id="3.40.47.10:FF:000068">
    <property type="entry name" value="3-oxoacyl-[acyl-carrier-protein] synthase 3"/>
    <property type="match status" value="1"/>
</dbReference>
<dbReference type="Gene3D" id="3.40.47.10">
    <property type="match status" value="2"/>
</dbReference>
<dbReference type="HAMAP" id="MF_01815">
    <property type="entry name" value="FabH"/>
    <property type="match status" value="1"/>
</dbReference>
<dbReference type="InterPro" id="IPR013747">
    <property type="entry name" value="ACP_syn_III_C"/>
</dbReference>
<dbReference type="InterPro" id="IPR013751">
    <property type="entry name" value="ACP_syn_III_N"/>
</dbReference>
<dbReference type="InterPro" id="IPR004655">
    <property type="entry name" value="FabH"/>
</dbReference>
<dbReference type="InterPro" id="IPR016039">
    <property type="entry name" value="Thiolase-like"/>
</dbReference>
<dbReference type="NCBIfam" id="TIGR00747">
    <property type="entry name" value="fabH"/>
    <property type="match status" value="1"/>
</dbReference>
<dbReference type="NCBIfam" id="NF006829">
    <property type="entry name" value="PRK09352.1"/>
    <property type="match status" value="1"/>
</dbReference>
<dbReference type="PANTHER" id="PTHR43091">
    <property type="entry name" value="3-OXOACYL-[ACYL-CARRIER-PROTEIN] SYNTHASE"/>
    <property type="match status" value="1"/>
</dbReference>
<dbReference type="PANTHER" id="PTHR43091:SF1">
    <property type="entry name" value="BETA-KETOACYL-[ACYL-CARRIER-PROTEIN] SYNTHASE III, CHLOROPLASTIC"/>
    <property type="match status" value="1"/>
</dbReference>
<dbReference type="Pfam" id="PF08545">
    <property type="entry name" value="ACP_syn_III"/>
    <property type="match status" value="1"/>
</dbReference>
<dbReference type="Pfam" id="PF08541">
    <property type="entry name" value="ACP_syn_III_C"/>
    <property type="match status" value="1"/>
</dbReference>
<dbReference type="SUPFAM" id="SSF53901">
    <property type="entry name" value="Thiolase-like"/>
    <property type="match status" value="1"/>
</dbReference>
<protein>
    <recommendedName>
        <fullName evidence="1">Beta-ketoacyl-[acyl-carrier-protein] synthase III 1</fullName>
        <shortName evidence="1">Beta-ketoacyl-ACP synthase III 1</shortName>
        <shortName evidence="1">KAS III 1</shortName>
        <ecNumber evidence="1">2.3.1.180</ecNumber>
    </recommendedName>
    <alternativeName>
        <fullName evidence="1">3-oxoacyl-[acyl-carrier-protein] synthase 3 1</fullName>
    </alternativeName>
    <alternativeName>
        <fullName evidence="1">3-oxoacyl-[acyl-carrier-protein] synthase III 1</fullName>
    </alternativeName>
</protein>
<proteinExistence type="evidence at protein level"/>
<gene>
    <name evidence="1" type="primary">fabH1</name>
    <name type="ordered locus">VC_2023</name>
</gene>
<accession>Q9KQH5</accession>
<organism>
    <name type="scientific">Vibrio cholerae serotype O1 (strain ATCC 39315 / El Tor Inaba N16961)</name>
    <dbReference type="NCBI Taxonomy" id="243277"/>
    <lineage>
        <taxon>Bacteria</taxon>
        <taxon>Pseudomonadati</taxon>
        <taxon>Pseudomonadota</taxon>
        <taxon>Gammaproteobacteria</taxon>
        <taxon>Vibrionales</taxon>
        <taxon>Vibrionaceae</taxon>
        <taxon>Vibrio</taxon>
    </lineage>
</organism>